<gene>
    <name evidence="5" type="primary">FOMT2</name>
</gene>
<sequence>MGRDEEAAARAEAWNHGFGFIKTSVIKTAIELEIPDILHNHGAPLSLSALSSAVGVPPDRLHRIMRFLTHHGVSKKTASPPGESDYYYAETAVSRSLTKDNLGAFVLLQGAQRGPSACITAQGLKSRERPGVEELGSDPLYEDPIFTKMVFRDAMACHARLTTSAVIENYGEGFRGVGSLVDVGGSYGMTLGMLVEAFPWIRGICYDLPQVVAKAKPLHGVEFVAGSMFESVPEADVVMLMFVLHNWSDNECIDILKRCKEAIPRETGKVMIIDAIIEEDGEGDEFAEARLGLDVTMMAVTFEGKERTHREWAFILKEAGFRKYVVKNIKALESLIEAYP</sequence>
<proteinExistence type="evidence at protein level"/>
<comment type="function">
    <text evidence="3">Flavonoid 7-O-methyltransferase involved in the biosynthesis of polymethoxylated flavonoids natural products such as nevadensin and salvigenin, aroma compounds which contribute to the flavor of sweet basil, and exhibit pharmacological activities such as anti-allergic, anti-oxidant, antibacterial, anti-proliferative, and anti-inflammatory effects (PubMed:22923679). Catalyzes S-adenosylmethionine-dependent regioselective 7-O-methylation of flavonoids; active on various hydroxylated flavonoid substrates, including apigenin (API) and luteolin (LUT), and, with a lower efficiency, scutellarein (SCU), naringenin (NAR), chrysoeriol (CHRYS), diosmetin (DIOS), acacetin (ACA) and scutellarein-7-methyl ether (SCU7Me) (PubMed:22923679).</text>
</comment>
<comment type="catalytic activity">
    <reaction evidence="3">
        <text>scutellarein 4'-methyl ether + S-adenosyl-L-methionine = ladanein + S-adenosyl-L-homocysteine</text>
        <dbReference type="Rhea" id="RHEA:73111"/>
        <dbReference type="ChEBI" id="CHEBI:57856"/>
        <dbReference type="ChEBI" id="CHEBI:59789"/>
        <dbReference type="ChEBI" id="CHEBI:192702"/>
        <dbReference type="ChEBI" id="CHEBI:192755"/>
    </reaction>
    <physiologicalReaction direction="left-to-right" evidence="7">
        <dbReference type="Rhea" id="RHEA:73112"/>
    </physiologicalReaction>
</comment>
<comment type="catalytic activity">
    <reaction evidence="3">
        <text>acacetin + S-adenosyl-L-methionine = apigenin 4',7-dimethyl ether + S-adenosyl-L-homocysteine</text>
        <dbReference type="Rhea" id="RHEA:73107"/>
        <dbReference type="ChEBI" id="CHEBI:2769"/>
        <dbReference type="ChEBI" id="CHEBI:57284"/>
        <dbReference type="ChEBI" id="CHEBI:57856"/>
        <dbReference type="ChEBI" id="CHEBI:59789"/>
    </reaction>
    <physiologicalReaction direction="left-to-right" evidence="7">
        <dbReference type="Rhea" id="RHEA:73108"/>
    </physiologicalReaction>
</comment>
<comment type="catalytic activity">
    <reaction evidence="3">
        <text>diosmetin + S-adenosyl-L-methionine = luteolin 4',7-dimethyl ether + S-adenosyl-L-homocysteine</text>
        <dbReference type="Rhea" id="RHEA:73103"/>
        <dbReference type="ChEBI" id="CHEBI:57856"/>
        <dbReference type="ChEBI" id="CHEBI:59789"/>
        <dbReference type="ChEBI" id="CHEBI:192749"/>
        <dbReference type="ChEBI" id="CHEBI:192751"/>
    </reaction>
    <physiologicalReaction direction="left-to-right" evidence="7">
        <dbReference type="Rhea" id="RHEA:73104"/>
    </physiologicalReaction>
</comment>
<comment type="catalytic activity">
    <reaction evidence="3">
        <text>chrysoeriol + S-adenosyl-L-methionine = velutin + S-adenosyl-L-homocysteine</text>
        <dbReference type="Rhea" id="RHEA:73083"/>
        <dbReference type="ChEBI" id="CHEBI:57799"/>
        <dbReference type="ChEBI" id="CHEBI:57856"/>
        <dbReference type="ChEBI" id="CHEBI:59789"/>
        <dbReference type="ChEBI" id="CHEBI:177047"/>
    </reaction>
    <physiologicalReaction direction="left-to-right" evidence="7">
        <dbReference type="Rhea" id="RHEA:73084"/>
    </physiologicalReaction>
</comment>
<comment type="catalytic activity">
    <reaction evidence="3">
        <text>(2S)-naringenin + S-adenosyl-L-methionine = (2S)-sakuranetin + S-adenosyl-L-homocysteine + H(+)</text>
        <dbReference type="Rhea" id="RHEA:31539"/>
        <dbReference type="ChEBI" id="CHEBI:15378"/>
        <dbReference type="ChEBI" id="CHEBI:17846"/>
        <dbReference type="ChEBI" id="CHEBI:28927"/>
        <dbReference type="ChEBI" id="CHEBI:57856"/>
        <dbReference type="ChEBI" id="CHEBI:59789"/>
        <dbReference type="EC" id="2.1.1.232"/>
    </reaction>
    <physiologicalReaction direction="left-to-right" evidence="7">
        <dbReference type="Rhea" id="RHEA:31540"/>
    </physiologicalReaction>
</comment>
<comment type="catalytic activity">
    <reaction evidence="3">
        <text>apigenin + S-adenosyl-L-methionine = genkwanin + S-adenosyl-L-homocysteine + H(+)</text>
        <dbReference type="Rhea" id="RHEA:73071"/>
        <dbReference type="ChEBI" id="CHEBI:15378"/>
        <dbReference type="ChEBI" id="CHEBI:57856"/>
        <dbReference type="ChEBI" id="CHEBI:58470"/>
        <dbReference type="ChEBI" id="CHEBI:59789"/>
        <dbReference type="ChEBI" id="CHEBI:192700"/>
    </reaction>
    <physiologicalReaction direction="left-to-right" evidence="7">
        <dbReference type="Rhea" id="RHEA:73072"/>
    </physiologicalReaction>
</comment>
<comment type="catalytic activity">
    <reaction evidence="3">
        <text>luteolin + S-adenosyl-L-methionine = luteolin 7-methyl ether + S-adenosyl-L-homocysteine + H(+)</text>
        <dbReference type="Rhea" id="RHEA:73075"/>
        <dbReference type="ChEBI" id="CHEBI:15378"/>
        <dbReference type="ChEBI" id="CHEBI:57545"/>
        <dbReference type="ChEBI" id="CHEBI:57856"/>
        <dbReference type="ChEBI" id="CHEBI:59789"/>
        <dbReference type="ChEBI" id="CHEBI:192705"/>
    </reaction>
    <physiologicalReaction direction="left-to-right" evidence="7">
        <dbReference type="Rhea" id="RHEA:73076"/>
    </physiologicalReaction>
</comment>
<comment type="catalytic activity">
    <reaction evidence="3">
        <text>scutellarein + S-adenosyl-L-methionine = scutellarein 7-methyl ether + S-adenosyl-L-homocysteine</text>
        <dbReference type="Rhea" id="RHEA:73079"/>
        <dbReference type="ChEBI" id="CHEBI:57856"/>
        <dbReference type="ChEBI" id="CHEBI:59789"/>
        <dbReference type="ChEBI" id="CHEBI:78328"/>
        <dbReference type="ChEBI" id="CHEBI:192701"/>
    </reaction>
    <physiologicalReaction direction="left-to-right" evidence="7">
        <dbReference type="Rhea" id="RHEA:73080"/>
    </physiologicalReaction>
</comment>
<comment type="biophysicochemical properties">
    <kinetics>
        <KM evidence="3">59 nM for apigenin (in the presence of S-adenosyl-L-methionine)</KM>
        <KM evidence="3">250 nM for luteolin (in the presence of S-adenosyl-L-methionine)</KM>
        <KM evidence="3">250 nM for scutellarein (in the presence of S-adenosyl-L-methionine)</KM>
        <KM evidence="3">1.9 uM for S-adenosyl-L-methionine (in the presence of apigenin)</KM>
        <text evidence="3">kcat is 43x10(-3) sec(-1) with apigenin as substrate (in the presence of S-adenosyl-L-methionine) (PubMed:22923679). kcat is 49x10(-3) sec(-1) with luteolin as substrate (in the presence of S-adenosyl-L-methionine) (PubMed:22923679). kcat is 29x10(-3) sec(-1) with scutellarein as substrate (in the presence of S-adenosyl-L-methionine) (PubMed:22923679).</text>
    </kinetics>
</comment>
<comment type="pathway">
    <text evidence="6">Flavonoid metabolism.</text>
</comment>
<comment type="subunit">
    <text evidence="1">Homodimer.</text>
</comment>
<comment type="tissue specificity">
    <text evidence="3">Expressed in leaves.</text>
</comment>
<comment type="developmental stage">
    <text evidence="3">Accumulates in young leaves but fades out during leaves aging.</text>
</comment>
<comment type="biotechnology">
    <text evidence="4">Nevadensin is a selective inhibitor of human carboxylesterase 1 (hCE-1), a key enzyme responsible for the hydrolysis of a wide range of endogenous and xenobiotic esters.</text>
</comment>
<comment type="similarity">
    <text evidence="2">Belongs to the class I-like SAM-binding methyltransferase superfamily. Cation-independent O-methyltransferase family.</text>
</comment>
<evidence type="ECO:0000250" key="1">
    <source>
        <dbReference type="UniProtKB" id="Q7XB10"/>
    </source>
</evidence>
<evidence type="ECO:0000255" key="2">
    <source>
        <dbReference type="PROSITE-ProRule" id="PRU01020"/>
    </source>
</evidence>
<evidence type="ECO:0000269" key="3">
    <source>
    </source>
</evidence>
<evidence type="ECO:0000269" key="4">
    <source>
    </source>
</evidence>
<evidence type="ECO:0000303" key="5">
    <source>
    </source>
</evidence>
<evidence type="ECO:0000303" key="6">
    <source>
    </source>
</evidence>
<evidence type="ECO:0000305" key="7">
    <source>
    </source>
</evidence>
<organism>
    <name type="scientific">Ocimum basilicum</name>
    <name type="common">Sweet basil</name>
    <dbReference type="NCBI Taxonomy" id="39350"/>
    <lineage>
        <taxon>Eukaryota</taxon>
        <taxon>Viridiplantae</taxon>
        <taxon>Streptophyta</taxon>
        <taxon>Embryophyta</taxon>
        <taxon>Tracheophyta</taxon>
        <taxon>Spermatophyta</taxon>
        <taxon>Magnoliopsida</taxon>
        <taxon>eudicotyledons</taxon>
        <taxon>Gunneridae</taxon>
        <taxon>Pentapetalae</taxon>
        <taxon>asterids</taxon>
        <taxon>lamiids</taxon>
        <taxon>Lamiales</taxon>
        <taxon>Lamiaceae</taxon>
        <taxon>Nepetoideae</taxon>
        <taxon>Ocimeae</taxon>
        <taxon>Ociminae</taxon>
        <taxon>Ocimum</taxon>
    </lineage>
</organism>
<reference key="1">
    <citation type="journal article" date="2012" name="Plant Physiol.">
        <title>A set of regioselective O-methyltransferases gives rise to the complex pattern of methoxylated flavones in sweet basil.</title>
        <authorList>
            <person name="Berim A."/>
            <person name="Hyatt D.C."/>
            <person name="Gang D.R."/>
        </authorList>
    </citation>
    <scope>NUCLEOTIDE SEQUENCE [MRNA]</scope>
    <scope>FUNCTION</scope>
    <scope>CATALYTIC ACTIVITY</scope>
    <scope>BIOPHYSICOCHEMICAL PROPERTIES</scope>
    <scope>TISSUE SPECIFICITY</scope>
    <scope>DEVELOPMENTAL STAGE</scope>
    <source>
        <strain>cv. EMX-1</strain>
        <strain>cv. SD</strain>
        <tissue>Peltate glandular trichome</tissue>
    </source>
</reference>
<reference key="2">
    <citation type="journal article" date="2018" name="Int. J. Biol. Macromol.">
        <title>Nevadensin is a naturally occurring selective inhibitor of human carboxylesterase 1.</title>
        <authorList>
            <person name="Wang Y.-Q."/>
            <person name="Weng Z.-M."/>
            <person name="Dou T.-Y."/>
            <person name="Hou J."/>
            <person name="Wang D.-D."/>
            <person name="Ding L.-L."/>
            <person name="Zou L.-W."/>
            <person name="Yu Y."/>
            <person name="Chen J."/>
            <person name="Tang H."/>
            <person name="Ge G.-B."/>
        </authorList>
    </citation>
    <scope>BIOTECHNOLOGY</scope>
</reference>
<reference key="3">
    <citation type="journal article" date="2019" name="Nat. Prod. Rep.">
        <title>Non-volatile natural products in plant glandular trichomes: chemistry, biological activities and biosynthesis.</title>
        <authorList>
            <person name="Liu Y."/>
            <person name="Jing S.-X."/>
            <person name="Luo S.-H."/>
            <person name="Li S.-H."/>
        </authorList>
    </citation>
    <scope>PATHWAY</scope>
    <scope>REVIEW</scope>
</reference>
<name>FOMT2_OCIBA</name>
<feature type="chain" id="PRO_0000456915" description="Flavonoid 7-O-methyltransferase 2">
    <location>
        <begin position="1"/>
        <end position="340"/>
    </location>
</feature>
<feature type="active site" description="Proton acceptor" evidence="2">
    <location>
        <position position="245"/>
    </location>
</feature>
<feature type="binding site" evidence="2">
    <location>
        <position position="207"/>
    </location>
    <ligand>
        <name>S-adenosyl-L-methionine</name>
        <dbReference type="ChEBI" id="CHEBI:59789"/>
    </ligand>
</feature>
<dbReference type="EC" id="2.1.1.-" evidence="2 3"/>
<dbReference type="EC" id="2.1.1.232" evidence="3"/>
<dbReference type="EMBL" id="JQ653276">
    <property type="protein sequence ID" value="AFU50296.1"/>
    <property type="molecule type" value="mRNA"/>
</dbReference>
<dbReference type="SMR" id="K0II72"/>
<dbReference type="BioCyc" id="MetaCyc:MONOMER-18657"/>
<dbReference type="GO" id="GO:0008171">
    <property type="term" value="F:O-methyltransferase activity"/>
    <property type="evidence" value="ECO:0007669"/>
    <property type="project" value="InterPro"/>
</dbReference>
<dbReference type="GO" id="GO:0046983">
    <property type="term" value="F:protein dimerization activity"/>
    <property type="evidence" value="ECO:0007669"/>
    <property type="project" value="InterPro"/>
</dbReference>
<dbReference type="GO" id="GO:0032259">
    <property type="term" value="P:methylation"/>
    <property type="evidence" value="ECO:0007669"/>
    <property type="project" value="UniProtKB-KW"/>
</dbReference>
<dbReference type="Gene3D" id="3.40.50.150">
    <property type="entry name" value="Vaccinia Virus protein VP39"/>
    <property type="match status" value="1"/>
</dbReference>
<dbReference type="Gene3D" id="1.10.10.10">
    <property type="entry name" value="Winged helix-like DNA-binding domain superfamily/Winged helix DNA-binding domain"/>
    <property type="match status" value="1"/>
</dbReference>
<dbReference type="InterPro" id="IPR016461">
    <property type="entry name" value="COMT-like"/>
</dbReference>
<dbReference type="InterPro" id="IPR001077">
    <property type="entry name" value="O_MeTrfase_dom"/>
</dbReference>
<dbReference type="InterPro" id="IPR012967">
    <property type="entry name" value="Plant_O-MeTrfase_dimerisation"/>
</dbReference>
<dbReference type="InterPro" id="IPR029063">
    <property type="entry name" value="SAM-dependent_MTases_sf"/>
</dbReference>
<dbReference type="InterPro" id="IPR036388">
    <property type="entry name" value="WH-like_DNA-bd_sf"/>
</dbReference>
<dbReference type="InterPro" id="IPR036390">
    <property type="entry name" value="WH_DNA-bd_sf"/>
</dbReference>
<dbReference type="PANTHER" id="PTHR11746">
    <property type="entry name" value="O-METHYLTRANSFERASE"/>
    <property type="match status" value="1"/>
</dbReference>
<dbReference type="Pfam" id="PF08100">
    <property type="entry name" value="Dimerisation"/>
    <property type="match status" value="1"/>
</dbReference>
<dbReference type="Pfam" id="PF00891">
    <property type="entry name" value="Methyltransf_2"/>
    <property type="match status" value="1"/>
</dbReference>
<dbReference type="PIRSF" id="PIRSF005739">
    <property type="entry name" value="O-mtase"/>
    <property type="match status" value="1"/>
</dbReference>
<dbReference type="SUPFAM" id="SSF53335">
    <property type="entry name" value="S-adenosyl-L-methionine-dependent methyltransferases"/>
    <property type="match status" value="1"/>
</dbReference>
<dbReference type="SUPFAM" id="SSF46785">
    <property type="entry name" value="Winged helix' DNA-binding domain"/>
    <property type="match status" value="1"/>
</dbReference>
<dbReference type="PROSITE" id="PS51683">
    <property type="entry name" value="SAM_OMT_II"/>
    <property type="match status" value="1"/>
</dbReference>
<protein>
    <recommendedName>
        <fullName evidence="5">Flavonoid 7-O-methyltransferase 2</fullName>
        <shortName evidence="5">ObFOMT2</shortName>
        <ecNumber evidence="2 3">2.1.1.-</ecNumber>
    </recommendedName>
    <alternativeName>
        <fullName evidence="7">4'-methylscutellarein 7-O-methyltransferase</fullName>
        <ecNumber evidence="3">2.1.1.-</ecNumber>
    </alternativeName>
    <alternativeName>
        <fullName evidence="7">Acacetin 7-O-methyltransferase</fullName>
        <ecNumber evidence="3">2.1.1.-</ecNumber>
    </alternativeName>
    <alternativeName>
        <fullName evidence="7">Apigenin 7-O-methyltransferase</fullName>
        <ecNumber evidence="3">2.1.1.-</ecNumber>
    </alternativeName>
    <alternativeName>
        <fullName evidence="7">Chrysoeriol 7-O-methyltransferase</fullName>
        <ecNumber evidence="3">2.1.1.-</ecNumber>
    </alternativeName>
    <alternativeName>
        <fullName evidence="7">Diosmetin 7-O-methyltransferase</fullName>
        <ecNumber evidence="3">2.1.1.-</ecNumber>
    </alternativeName>
    <alternativeName>
        <fullName evidence="7">Luteolin 7-O-methyltransferase</fullName>
        <ecNumber evidence="3">2.1.1.-</ecNumber>
    </alternativeName>
    <alternativeName>
        <fullName evidence="7">Naringenin 7-O-methyltransferase</fullName>
        <ecNumber evidence="3">2.1.1.232</ecNumber>
    </alternativeName>
    <alternativeName>
        <fullName evidence="7">Scutellarein 7-O-methyltransferase</fullName>
        <ecNumber evidence="3">2.1.1.-</ecNumber>
    </alternativeName>
</protein>
<keyword id="KW-0489">Methyltransferase</keyword>
<keyword id="KW-0949">S-adenosyl-L-methionine</keyword>
<keyword id="KW-0808">Transferase</keyword>
<accession>K0II72</accession>